<protein>
    <recommendedName>
        <fullName evidence="1">Cell cycle protein GpsB</fullName>
    </recommendedName>
    <alternativeName>
        <fullName evidence="1">Guiding PBP1-shuttling protein</fullName>
    </alternativeName>
</protein>
<comment type="function">
    <text evidence="1">Divisome component that associates with the complex late in its assembly, after the Z-ring is formed, and is dependent on DivIC and PBP2B for its recruitment to the divisome. Together with EzrA, is a key component of the system that regulates PBP1 localization during cell cycle progression. Its main role could be the removal of PBP1 from the cell pole after pole maturation is completed. Also contributes to the recruitment of PBP1 to the division complex. Not essential for septum formation.</text>
</comment>
<comment type="subunit">
    <text evidence="1">Forms polymers through the coiled coil domains. Interacts with PBP1, MreC and EzrA.</text>
</comment>
<comment type="subcellular location">
    <subcellularLocation>
        <location evidence="1">Cytoplasm</location>
    </subcellularLocation>
    <text evidence="1">Shuttles between the lateral wall and the division site in a cell cycle-dependent manner.</text>
</comment>
<comment type="similarity">
    <text evidence="1">Belongs to the GpsB family.</text>
</comment>
<proteinExistence type="inferred from homology"/>
<dbReference type="EMBL" id="CP000829">
    <property type="protein sequence ID" value="ACI61559.1"/>
    <property type="molecule type" value="Genomic_DNA"/>
</dbReference>
<dbReference type="SMR" id="B5XMJ7"/>
<dbReference type="KEGG" id="soz:Spy49_1276c"/>
<dbReference type="HOGENOM" id="CLU_140309_1_0_9"/>
<dbReference type="Proteomes" id="UP000001039">
    <property type="component" value="Chromosome"/>
</dbReference>
<dbReference type="GO" id="GO:0005737">
    <property type="term" value="C:cytoplasm"/>
    <property type="evidence" value="ECO:0007669"/>
    <property type="project" value="UniProtKB-SubCell"/>
</dbReference>
<dbReference type="GO" id="GO:0051301">
    <property type="term" value="P:cell division"/>
    <property type="evidence" value="ECO:0007669"/>
    <property type="project" value="UniProtKB-UniRule"/>
</dbReference>
<dbReference type="GO" id="GO:0008360">
    <property type="term" value="P:regulation of cell shape"/>
    <property type="evidence" value="ECO:0007669"/>
    <property type="project" value="UniProtKB-UniRule"/>
</dbReference>
<dbReference type="Gene3D" id="6.10.250.660">
    <property type="match status" value="1"/>
</dbReference>
<dbReference type="HAMAP" id="MF_02011">
    <property type="entry name" value="GpsB"/>
    <property type="match status" value="1"/>
</dbReference>
<dbReference type="InterPro" id="IPR011229">
    <property type="entry name" value="Cell_cycle_GpsB"/>
</dbReference>
<dbReference type="InterPro" id="IPR019933">
    <property type="entry name" value="DivIVA_domain"/>
</dbReference>
<dbReference type="InterPro" id="IPR007793">
    <property type="entry name" value="DivIVA_fam"/>
</dbReference>
<dbReference type="NCBIfam" id="TIGR03544">
    <property type="entry name" value="DivI1A_domain"/>
    <property type="match status" value="1"/>
</dbReference>
<dbReference type="NCBIfam" id="NF010725">
    <property type="entry name" value="PRK14127.1"/>
    <property type="match status" value="1"/>
</dbReference>
<dbReference type="PANTHER" id="PTHR35794:SF1">
    <property type="entry name" value="CELL CYCLE PROTEIN GPSB"/>
    <property type="match status" value="1"/>
</dbReference>
<dbReference type="PANTHER" id="PTHR35794">
    <property type="entry name" value="CELL DIVISION PROTEIN DIVIVA"/>
    <property type="match status" value="1"/>
</dbReference>
<dbReference type="Pfam" id="PF05103">
    <property type="entry name" value="DivIVA"/>
    <property type="match status" value="1"/>
</dbReference>
<dbReference type="PIRSF" id="PIRSF029938">
    <property type="entry name" value="UCP029938"/>
    <property type="match status" value="1"/>
</dbReference>
<organism>
    <name type="scientific">Streptococcus pyogenes serotype M49 (strain NZ131)</name>
    <dbReference type="NCBI Taxonomy" id="471876"/>
    <lineage>
        <taxon>Bacteria</taxon>
        <taxon>Bacillati</taxon>
        <taxon>Bacillota</taxon>
        <taxon>Bacilli</taxon>
        <taxon>Lactobacillales</taxon>
        <taxon>Streptococcaceae</taxon>
        <taxon>Streptococcus</taxon>
    </lineage>
</organism>
<evidence type="ECO:0000255" key="1">
    <source>
        <dbReference type="HAMAP-Rule" id="MF_02011"/>
    </source>
</evidence>
<accession>B5XMJ7</accession>
<reference key="1">
    <citation type="journal article" date="2008" name="J. Bacteriol.">
        <title>Genome sequence of a nephritogenic and highly transformable M49 strain of Streptococcus pyogenes.</title>
        <authorList>
            <person name="McShan W.M."/>
            <person name="Ferretti J.J."/>
            <person name="Karasawa T."/>
            <person name="Suvorov A.N."/>
            <person name="Lin S."/>
            <person name="Qin B."/>
            <person name="Jia H."/>
            <person name="Kenton S."/>
            <person name="Najar F."/>
            <person name="Wu H."/>
            <person name="Scott J."/>
            <person name="Roe B.A."/>
            <person name="Savic D.J."/>
        </authorList>
    </citation>
    <scope>NUCLEOTIDE SEQUENCE [LARGE SCALE GENOMIC DNA]</scope>
    <source>
        <strain>NZ131</strain>
    </source>
</reference>
<feature type="chain" id="PRO_1000189501" description="Cell cycle protein GpsB">
    <location>
        <begin position="1"/>
        <end position="108"/>
    </location>
</feature>
<feature type="coiled-coil region" evidence="1">
    <location>
        <begin position="32"/>
        <end position="69"/>
    </location>
</feature>
<sequence length="108" mass="12461">MTSIIYSPKDIFEQEFKTSMRGFDKKEVDEFLDNVIKDYENFNAQIEALKAENEALKKAKYQARNTVSATVQQPVPQPTRVAQSATNFDILKRISKLEKEVFGKQIIE</sequence>
<name>GPSB_STRPZ</name>
<gene>
    <name evidence="1" type="primary">gpsB</name>
    <name type="ordered locus">Spy49_1276c</name>
</gene>
<keyword id="KW-0131">Cell cycle</keyword>
<keyword id="KW-0132">Cell division</keyword>
<keyword id="KW-0133">Cell shape</keyword>
<keyword id="KW-0175">Coiled coil</keyword>
<keyword id="KW-0963">Cytoplasm</keyword>